<accession>B3A0E7</accession>
<keyword id="KW-0903">Direct protein sequencing</keyword>
<keyword id="KW-0527">Neuropeptide</keyword>
<keyword id="KW-0964">Secreted</keyword>
<reference evidence="5" key="1">
    <citation type="journal article" date="2012" name="Syst. Biol.">
        <title>Peptidomics-based phylogeny and biogeography of Mantophasmatodea (Hexapoda).</title>
        <authorList>
            <person name="Predel R."/>
            <person name="Neupert S."/>
            <person name="Huetteroth W."/>
            <person name="Kahnt J."/>
            <person name="Waidelich D."/>
            <person name="Roth S."/>
        </authorList>
    </citation>
    <scope>PROTEIN SEQUENCE</scope>
    <source>
        <tissue evidence="3">Thoracic perisympathetic organs</tissue>
    </source>
</reference>
<comment type="function">
    <text evidence="1">FMRFamides and FMRFamide-like peptides are neuropeptides.</text>
</comment>
<comment type="subcellular location">
    <subcellularLocation>
        <location evidence="6">Secreted</location>
    </subcellularLocation>
</comment>
<comment type="similarity">
    <text evidence="2">Belongs to the FARP (FMRF amide related peptide) family.</text>
</comment>
<organism>
    <name type="scientific">Austrophasma gansbaaiense</name>
    <name type="common">Gladiator</name>
    <name type="synonym">Heel-walker</name>
    <dbReference type="NCBI Taxonomy" id="253136"/>
    <lineage>
        <taxon>Eukaryota</taxon>
        <taxon>Metazoa</taxon>
        <taxon>Ecdysozoa</taxon>
        <taxon>Arthropoda</taxon>
        <taxon>Hexapoda</taxon>
        <taxon>Insecta</taxon>
        <taxon>Pterygota</taxon>
        <taxon>Neoptera</taxon>
        <taxon>Polyneoptera</taxon>
        <taxon>Mantophasmatodea</taxon>
        <taxon>Austrophasmatidae</taxon>
        <taxon>Austrophasma</taxon>
    </lineage>
</organism>
<name>FAR10_AUSGA</name>
<protein>
    <recommendedName>
        <fullName evidence="4">Extended FMRFamide-10</fullName>
        <shortName evidence="4">FMRFa-10</shortName>
    </recommendedName>
</protein>
<evidence type="ECO:0000250" key="1">
    <source>
        <dbReference type="UniProtKB" id="P34405"/>
    </source>
</evidence>
<evidence type="ECO:0000255" key="2"/>
<evidence type="ECO:0000269" key="3">
    <source>
    </source>
</evidence>
<evidence type="ECO:0000303" key="4">
    <source>
    </source>
</evidence>
<evidence type="ECO:0000305" key="5"/>
<evidence type="ECO:0000305" key="6">
    <source>
    </source>
</evidence>
<feature type="peptide" id="PRO_0000421547" description="Extended FMRFamide-10" evidence="3">
    <location>
        <begin position="1"/>
        <end position="11"/>
    </location>
</feature>
<feature type="unsure residue" description="L or I" evidence="3">
    <location>
        <position position="8"/>
    </location>
</feature>
<dbReference type="GO" id="GO:0005576">
    <property type="term" value="C:extracellular region"/>
    <property type="evidence" value="ECO:0007669"/>
    <property type="project" value="UniProtKB-SubCell"/>
</dbReference>
<dbReference type="GO" id="GO:0007218">
    <property type="term" value="P:neuropeptide signaling pathway"/>
    <property type="evidence" value="ECO:0007669"/>
    <property type="project" value="UniProtKB-KW"/>
</dbReference>
<proteinExistence type="evidence at protein level"/>
<sequence length="11" mass="1272">PAPETNYLRDP</sequence>